<name>CLAMP_BPT4</name>
<proteinExistence type="evidence at protein level"/>
<feature type="chain" id="PRO_0000149229" description="Sliding clamp">
    <location>
        <begin position="1"/>
        <end position="228"/>
    </location>
</feature>
<feature type="sequence conflict" description="In Ref. 1; CAA24777." evidence="14" ref="1">
    <location>
        <position position="69"/>
    </location>
</feature>
<feature type="sequence conflict" description="In Ref. 1; CAA24777/CAA25340/AAC05393." evidence="14" ref="1">
    <original>P</original>
    <variation>R</variation>
    <location>
        <position position="93"/>
    </location>
</feature>
<feature type="sequence conflict" description="In Ref. 1; CAA24777." evidence="14" ref="1">
    <original>V</original>
    <variation>D</variation>
    <location>
        <position position="100"/>
    </location>
</feature>
<feature type="sequence conflict" description="In Ref. 1; CAA24777." evidence="14" ref="1">
    <original>V</original>
    <variation>L</variation>
    <location>
        <position position="129"/>
    </location>
</feature>
<feature type="helix" evidence="21">
    <location>
        <begin position="5"/>
        <end position="17"/>
    </location>
</feature>
<feature type="strand" evidence="22">
    <location>
        <begin position="18"/>
        <end position="20"/>
    </location>
</feature>
<feature type="strand" evidence="21">
    <location>
        <begin position="21"/>
        <end position="23"/>
    </location>
</feature>
<feature type="strand" evidence="21">
    <location>
        <begin position="25"/>
        <end position="32"/>
    </location>
</feature>
<feature type="strand" evidence="21">
    <location>
        <begin position="36"/>
        <end position="48"/>
    </location>
</feature>
<feature type="strand" evidence="21">
    <location>
        <begin position="52"/>
        <end position="55"/>
    </location>
</feature>
<feature type="helix" evidence="21">
    <location>
        <begin position="57"/>
        <end position="64"/>
    </location>
</feature>
<feature type="strand" evidence="21">
    <location>
        <begin position="72"/>
        <end position="75"/>
    </location>
</feature>
<feature type="strand" evidence="21">
    <location>
        <begin position="79"/>
        <end position="84"/>
    </location>
</feature>
<feature type="strand" evidence="21">
    <location>
        <begin position="86"/>
        <end position="92"/>
    </location>
</feature>
<feature type="helix" evidence="21">
    <location>
        <begin position="97"/>
        <end position="99"/>
    </location>
</feature>
<feature type="strand" evidence="21">
    <location>
        <begin position="113"/>
        <end position="118"/>
    </location>
</feature>
<feature type="helix" evidence="21">
    <location>
        <begin position="120"/>
        <end position="133"/>
    </location>
</feature>
<feature type="strand" evidence="21">
    <location>
        <begin position="137"/>
        <end position="143"/>
    </location>
</feature>
<feature type="strand" evidence="21">
    <location>
        <begin position="146"/>
        <end position="152"/>
    </location>
</feature>
<feature type="turn" evidence="21">
    <location>
        <begin position="154"/>
        <end position="156"/>
    </location>
</feature>
<feature type="strand" evidence="20">
    <location>
        <begin position="158"/>
        <end position="160"/>
    </location>
</feature>
<feature type="strand" evidence="21">
    <location>
        <begin position="164"/>
        <end position="171"/>
    </location>
</feature>
<feature type="strand" evidence="21">
    <location>
        <begin position="177"/>
        <end position="183"/>
    </location>
</feature>
<feature type="helix" evidence="21">
    <location>
        <begin position="184"/>
        <end position="186"/>
    </location>
</feature>
<feature type="strand" evidence="21">
    <location>
        <begin position="194"/>
        <end position="201"/>
    </location>
</feature>
<feature type="strand" evidence="21">
    <location>
        <begin position="204"/>
        <end position="213"/>
    </location>
</feature>
<feature type="strand" evidence="21">
    <location>
        <begin position="215"/>
        <end position="219"/>
    </location>
</feature>
<feature type="strand" evidence="21">
    <location>
        <begin position="225"/>
        <end position="227"/>
    </location>
</feature>
<reference key="1">
    <citation type="journal article" date="1982" name="J. Biol. Chem.">
        <title>Bacteriophage T4 gene 45. Sequences of the structural gene and its protein product.</title>
        <authorList>
            <person name="Spicer E.K."/>
            <person name="Noble J.A."/>
            <person name="Nossal N.G."/>
            <person name="Konigsberg W.H."/>
            <person name="Williams K.R."/>
        </authorList>
    </citation>
    <scope>NUCLEOTIDE SEQUENCE [GENOMIC DNA]</scope>
</reference>
<reference key="2">
    <citation type="submission" date="1998-03" db="EMBL/GenBank/DDBJ databases">
        <authorList>
            <person name="Spicer E.K."/>
        </authorList>
    </citation>
    <scope>SEQUENCE REVISION TO 69; 100 AND 129</scope>
</reference>
<reference key="3">
    <citation type="journal article" date="2003" name="Microbiol. Mol. Biol. Rev.">
        <title>Bacteriophage T4 genome.</title>
        <authorList>
            <person name="Miller E.S."/>
            <person name="Kutter E."/>
            <person name="Mosig G."/>
            <person name="Arisaka F."/>
            <person name="Kunisawa T."/>
            <person name="Ruger W."/>
        </authorList>
    </citation>
    <scope>NUCLEOTIDE SEQUENCE [LARGE SCALE GENOMIC DNA]</scope>
</reference>
<reference key="4">
    <citation type="journal article" date="1987" name="J. Virol.">
        <title>Identification of two new bacteriophage T4 genes that may have roles in transcription and DNA replication.</title>
        <authorList>
            <person name="Hsu T."/>
            <person name="Wei R."/>
            <person name="Dawson M."/>
            <person name="Karam J.D."/>
        </authorList>
    </citation>
    <scope>NUCLEOTIDE SEQUENCE [GENOMIC DNA] OF 1-36</scope>
</reference>
<reference key="5">
    <citation type="journal article" date="1993" name="Proc. Natl. Acad. Sci. U.S.A.">
        <title>Assembly of a functional replication complex without ATP hydrolysis: a direct interaction of bacteriophage T4 gp45 with T4 DNA polymerase.</title>
        <authorList>
            <person name="Reddy M.K."/>
            <person name="Weitzel S.E."/>
            <person name="von Hippel P.H."/>
        </authorList>
    </citation>
    <scope>INTERACTION WITH THE VIRAL DNA POLYMERASE</scope>
</reference>
<reference key="6">
    <citation type="journal article" date="1997" name="J. Biol. Chem.">
        <title>Structural analyses of gp45 sliding clamp interactions during assembly of the bacteriophage T4 DNA polymerase holoenzyme. III. The Gp43 DNA polymerase binds to the same face of the sliding clamp as the clamp loader.</title>
        <authorList>
            <person name="Latham G.J."/>
            <person name="Bacheller D.J."/>
            <person name="Pietroni P."/>
            <person name="von Hippel P.H."/>
        </authorList>
    </citation>
    <scope>INTERACTION WITH THE VIRAL DNA POLYMERASE</scope>
</reference>
<reference key="7">
    <citation type="journal article" date="1999" name="Proc. Natl. Acad. Sci. U.S.A.">
        <title>Opening of a monomer-monomer interface of the trimeric bacteriophage T4-coded GP45 sliding clamp is required for clamp loading onto DNA.</title>
        <authorList>
            <person name="Latham G.J."/>
            <person name="Dong F."/>
            <person name="Pietroni P."/>
            <person name="Dozono J.M."/>
            <person name="Bacheller D.J."/>
            <person name="von Hippel P.H."/>
        </authorList>
    </citation>
    <scope>FUNCTION</scope>
</reference>
<reference key="8">
    <citation type="journal article" date="2006" name="Biochemistry">
        <title>Single-molecule investigation of the T4 bacteriophage DNA polymerase holoenzyme: multiple pathways of holoenzyme formation.</title>
        <authorList>
            <person name="Smiley R.D."/>
            <person name="Zhuang Z."/>
            <person name="Benkovic S.J."/>
            <person name="Hammes G.G."/>
        </authorList>
    </citation>
    <scope>IDENTIFICATION IN THE REPLICASE COMPLEX</scope>
</reference>
<reference key="9">
    <citation type="journal article" date="2015" name="Viruses">
        <title>Coordinated DNA replication by the bacteriophage T4 replisome.</title>
        <authorList>
            <person name="Noble E."/>
            <person name="Spiering M.M."/>
            <person name="Benkovic S.J."/>
        </authorList>
    </citation>
    <scope>REVIEW</scope>
    <scope>IDENTIFICATION IN THE REPLICASE COMPLEX</scope>
</reference>
<reference key="10">
    <citation type="journal article" date="2016" name="Biochemistry">
        <title>Molecular dissection of the homotrimeric sliding clamp of T4 Phage: two domains of a subunit display asymmetric characteristics.</title>
        <authorList>
            <person name="Singh M.I."/>
            <person name="Jain V."/>
        </authorList>
    </citation>
    <scope>SUBUNIT</scope>
</reference>
<reference key="11">
    <citation type="journal article" date="2000" name="J. Mol. Biol.">
        <title>Crystal structure of the DNA polymerase processivity factor of T4 bacteriophage.</title>
        <authorList>
            <person name="Moarefi I."/>
            <person name="Jeruzalmi D."/>
            <person name="Turner J."/>
            <person name="O'Donnell M."/>
            <person name="Kuriyan J."/>
        </authorList>
    </citation>
    <scope>X-RAY CRYSTALLOGRAPHY (2.45 ANGSTROMS)</scope>
</reference>
<reference evidence="15 16 17" key="12">
    <citation type="journal article" date="2011" name="Science">
        <title>How a DNA polymerase clamp loader opens a sliding clamp.</title>
        <authorList>
            <person name="Kelch B.A."/>
            <person name="Makino D.L."/>
            <person name="O'Donnell M."/>
            <person name="Kuriyan J."/>
        </authorList>
    </citation>
    <scope>X-RAY CRYSTALLOGRAPHY (3.20 ANGSTROMS)</scope>
    <scope>FUNCTION</scope>
    <scope>INTERACTION WITH THE SLIDING-CLAMP-LOADER</scope>
</reference>
<reference evidence="18" key="13">
    <citation type="journal article" date="2018" name="Nucleic Acids Res.">
        <title>T4 DNA ligase structure reveals a prototypical ATP-dependent ligase with a unique mode of sliding clamp interaction.</title>
        <authorList>
            <person name="Shi K."/>
            <person name="Bohl T.E."/>
            <person name="Park J."/>
            <person name="Zasada A."/>
            <person name="Malik S."/>
            <person name="Banerjee S."/>
            <person name="Tran V."/>
            <person name="Li N."/>
            <person name="Yin Z."/>
            <person name="Kurniawan F."/>
            <person name="Orellana K."/>
            <person name="Aihara H."/>
        </authorList>
    </citation>
    <scope>X-RAY CRYSTALLOGRAPHY (2.12 ANGSTROMS)</scope>
    <scope>INTERACTION WITH THE VIRAL DNA LIGASE</scope>
    <scope>SUBUNIT</scope>
</reference>
<reference evidence="19" key="14">
    <citation type="journal article" date="2021" name="Nat. Commun.">
        <title>Transcription activation by a sliding clamp.</title>
        <authorList>
            <person name="Shi J."/>
            <person name="Wen A."/>
            <person name="Jin S."/>
            <person name="Gao B."/>
            <person name="Huang Y."/>
            <person name="Feng Y."/>
        </authorList>
    </citation>
    <scope>STRUCTURE BY ELECTRON MICROSCOPY (4.50 ANGSTROMS)</scope>
    <scope>IDENTIFICATION IN THE TRANSCRIPTION ACTIVATION COMPLEX</scope>
    <scope>INTERACTION WITH HOST RNA POLYMERASE</scope>
    <scope>FUNCTION</scope>
</reference>
<keyword id="KW-0002">3D-structure</keyword>
<keyword id="KW-0235">DNA replication</keyword>
<keyword id="KW-1185">Reference proteome</keyword>
<keyword id="KW-1194">Viral DNA replication</keyword>
<keyword id="KW-1195">Viral transcription</keyword>
<comment type="function">
    <text evidence="1 2 4 8">Sliding clamp that encircles the genomic DNA and links the DNA polymerase to the template to control the processivity of DNA synthesis. Responsible for tethering the catalytic subunit of DNA polymerase to DNA during high-speed replication (PubMed:10535942). Interaction with the sliding-clamp-loader opens the sliding clamp so that it can be loaded around the DNA template (PubMed:22194570). During transcription, encircles the DNA and tethers host RNA polymerase (RNAP) to it (PubMed:33602900).</text>
</comment>
<comment type="subunit">
    <text evidence="1 3 4 5 6 7 8 9 10">Homotrimer (PubMed:26735934, PubMed:30169742). Interacts with the viral DNA polymerase; this interaction constitutes the polymerase holoenzyme (PubMed:8475061, PubMed:9395510). Interacts with the sliding-clamp-loader; this interaction allows the sliding-clamp-loader to open the sliding clamp (PubMed:22194570). Interacts with the viral DNA ligase (PubMed:30169742). Part of the replicase complex that includes the DNA polymerase, the polymerase clamp, the clamp loader complex, the single-stranded DNA binding protein, the primase, the helicase and the helicase assembly factor (PubMed:16800624, PubMed:26102578). Interacts with the viral RNA polymerase (RNAP) (PubMed:33602900). Part of the transcription activation complex containing host RNAP, the viral RNA polymerase sigma-like factor, the late transcription coactivator, and the sliding clamp (PubMed:33602900).</text>
</comment>
<comment type="similarity">
    <text evidence="1">Belongs to the Tevenvirinae sliding clamp family.</text>
</comment>
<evidence type="ECO:0000255" key="1">
    <source>
        <dbReference type="HAMAP-Rule" id="MF_04161"/>
    </source>
</evidence>
<evidence type="ECO:0000269" key="2">
    <source>
    </source>
</evidence>
<evidence type="ECO:0000269" key="3">
    <source>
    </source>
</evidence>
<evidence type="ECO:0000269" key="4">
    <source>
    </source>
</evidence>
<evidence type="ECO:0000269" key="5">
    <source>
    </source>
</evidence>
<evidence type="ECO:0000269" key="6">
    <source>
    </source>
</evidence>
<evidence type="ECO:0000269" key="7">
    <source>
    </source>
</evidence>
<evidence type="ECO:0000269" key="8">
    <source>
    </source>
</evidence>
<evidence type="ECO:0000269" key="9">
    <source>
    </source>
</evidence>
<evidence type="ECO:0000269" key="10">
    <source>
    </source>
</evidence>
<evidence type="ECO:0000303" key="11">
    <source>
    </source>
</evidence>
<evidence type="ECO:0000303" key="12">
    <source>
    </source>
</evidence>
<evidence type="ECO:0000303" key="13">
    <source>
    </source>
</evidence>
<evidence type="ECO:0000305" key="14"/>
<evidence type="ECO:0007744" key="15">
    <source>
        <dbReference type="PDB" id="3U5Z"/>
    </source>
</evidence>
<evidence type="ECO:0007744" key="16">
    <source>
        <dbReference type="PDB" id="3U60"/>
    </source>
</evidence>
<evidence type="ECO:0007744" key="17">
    <source>
        <dbReference type="PDB" id="3U61"/>
    </source>
</evidence>
<evidence type="ECO:0007744" key="18">
    <source>
        <dbReference type="PDB" id="6DRT"/>
    </source>
</evidence>
<evidence type="ECO:0007744" key="19">
    <source>
        <dbReference type="PDB" id="7D7D"/>
    </source>
</evidence>
<evidence type="ECO:0007829" key="20">
    <source>
        <dbReference type="PDB" id="3U61"/>
    </source>
</evidence>
<evidence type="ECO:0007829" key="21">
    <source>
        <dbReference type="PDB" id="6DRT"/>
    </source>
</evidence>
<evidence type="ECO:0007829" key="22">
    <source>
        <dbReference type="PDB" id="8UNH"/>
    </source>
</evidence>
<gene>
    <name type="primary">45</name>
</gene>
<organismHost>
    <name type="scientific">Escherichia coli</name>
    <dbReference type="NCBI Taxonomy" id="562"/>
</organismHost>
<protein>
    <recommendedName>
        <fullName evidence="1 12">Sliding clamp</fullName>
    </recommendedName>
    <alternativeName>
        <fullName evidence="1">DNA polymerase accessory protein Gp45</fullName>
    </alternativeName>
    <alternativeName>
        <fullName evidence="1 11">DNA polymerase clamp</fullName>
    </alternativeName>
    <alternativeName>
        <fullName>Gene product 45</fullName>
        <shortName>gp45</shortName>
    </alternativeName>
    <alternativeName>
        <fullName evidence="13">Sliding clamp Gp45</fullName>
    </alternativeName>
</protein>
<sequence>MKLSKDTTALLKNFATINSGIMLKSGQFIMTRAVNGTTYAEANISDVIDFDVAIYDLNGFLGILSLVNDDAEISQSEDGNIKIADARSTIFWPAADPSTVVAPNKPIPFPVASAVTEIKAEDLQQLLRVSRGLQIDTIAITVKEGKIVINGFNKVEDSALTRVKYSLTLGDYDGENTFNFIINMANMKMQPGNYKLLLWAKGKQGAAKFEGEHANYVVALEADSTHDF</sequence>
<accession>P04525</accession>
<accession>Q9T0Q0</accession>
<organism>
    <name type="scientific">Enterobacteria phage T4</name>
    <name type="common">Bacteriophage T4</name>
    <dbReference type="NCBI Taxonomy" id="10665"/>
    <lineage>
        <taxon>Viruses</taxon>
        <taxon>Duplodnaviria</taxon>
        <taxon>Heunggongvirae</taxon>
        <taxon>Uroviricota</taxon>
        <taxon>Caudoviricetes</taxon>
        <taxon>Straboviridae</taxon>
        <taxon>Tevenvirinae</taxon>
        <taxon>Tequatrovirus</taxon>
    </lineage>
</organism>
<dbReference type="EMBL" id="V01535">
    <property type="protein sequence ID" value="CAA24777.1"/>
    <property type="molecule type" value="Genomic_DNA"/>
</dbReference>
<dbReference type="EMBL" id="M10160">
    <property type="protein sequence ID" value="AAC05393.1"/>
    <property type="molecule type" value="Genomic_DNA"/>
</dbReference>
<dbReference type="EMBL" id="X00769">
    <property type="protein sequence ID" value="CAA25340.1"/>
    <property type="molecule type" value="Genomic_DNA"/>
</dbReference>
<dbReference type="EMBL" id="AF158101">
    <property type="protein sequence ID" value="AAD42470.1"/>
    <property type="molecule type" value="Genomic_DNA"/>
</dbReference>
<dbReference type="EMBL" id="M15080">
    <property type="protein sequence ID" value="AAA32519.1"/>
    <property type="molecule type" value="Genomic_DNA"/>
</dbReference>
<dbReference type="PIR" id="A04301">
    <property type="entry name" value="IDBP44"/>
</dbReference>
<dbReference type="RefSeq" id="NP_049666.1">
    <property type="nucleotide sequence ID" value="NC_000866.4"/>
</dbReference>
<dbReference type="PDB" id="1CZD">
    <property type="method" value="X-ray"/>
    <property type="resolution" value="2.45 A"/>
    <property type="chains" value="A/B/C=1-228"/>
</dbReference>
<dbReference type="PDB" id="3U5Z">
    <property type="method" value="X-ray"/>
    <property type="resolution" value="3.50 A"/>
    <property type="chains" value="F/G/H/P/Q/R=1-228"/>
</dbReference>
<dbReference type="PDB" id="3U60">
    <property type="method" value="X-ray"/>
    <property type="resolution" value="3.34 A"/>
    <property type="chains" value="F/G/H=1-228"/>
</dbReference>
<dbReference type="PDB" id="3U61">
    <property type="method" value="X-ray"/>
    <property type="resolution" value="3.20 A"/>
    <property type="chains" value="F/G/H=1-228"/>
</dbReference>
<dbReference type="PDB" id="6DRT">
    <property type="method" value="X-ray"/>
    <property type="resolution" value="2.12 A"/>
    <property type="chains" value="A/B/C=1-228"/>
</dbReference>
<dbReference type="PDB" id="7D7D">
    <property type="method" value="EM"/>
    <property type="resolution" value="4.50 A"/>
    <property type="chains" value="G/H/I=1-228"/>
</dbReference>
<dbReference type="PDB" id="8UH7">
    <property type="method" value="X-ray"/>
    <property type="resolution" value="2.63 A"/>
    <property type="chains" value="F/G/H=1-228"/>
</dbReference>
<dbReference type="PDB" id="8UK9">
    <property type="method" value="X-ray"/>
    <property type="resolution" value="3.10 A"/>
    <property type="chains" value="F/G/H/R/S/T=1-228"/>
</dbReference>
<dbReference type="PDB" id="8UNF">
    <property type="method" value="EM"/>
    <property type="resolution" value="3.15 A"/>
    <property type="chains" value="F/G/H=1-228"/>
</dbReference>
<dbReference type="PDB" id="8UNH">
    <property type="method" value="EM"/>
    <property type="resolution" value="3.21 A"/>
    <property type="chains" value="F/G/H=1-228"/>
</dbReference>
<dbReference type="PDBsum" id="1CZD"/>
<dbReference type="PDBsum" id="3U5Z"/>
<dbReference type="PDBsum" id="3U60"/>
<dbReference type="PDBsum" id="3U61"/>
<dbReference type="PDBsum" id="6DRT"/>
<dbReference type="PDBsum" id="7D7D"/>
<dbReference type="PDBsum" id="8UH7"/>
<dbReference type="PDBsum" id="8UK9"/>
<dbReference type="PDBsum" id="8UNF"/>
<dbReference type="PDBsum" id="8UNH"/>
<dbReference type="EMDB" id="EMD-30605"/>
<dbReference type="EMDB" id="EMD-42399"/>
<dbReference type="EMDB" id="EMD-42402"/>
<dbReference type="SMR" id="P04525"/>
<dbReference type="GeneID" id="1258821"/>
<dbReference type="KEGG" id="vg:1258821"/>
<dbReference type="OrthoDB" id="7567at10239"/>
<dbReference type="EvolutionaryTrace" id="P04525"/>
<dbReference type="Proteomes" id="UP000009087">
    <property type="component" value="Segment"/>
</dbReference>
<dbReference type="GO" id="GO:0030337">
    <property type="term" value="F:DNA polymerase processivity factor activity"/>
    <property type="evidence" value="ECO:0000315"/>
    <property type="project" value="UniProtKB"/>
</dbReference>
<dbReference type="GO" id="GO:0039686">
    <property type="term" value="P:bidirectional double-stranded viral DNA replication"/>
    <property type="evidence" value="ECO:0000314"/>
    <property type="project" value="UniProtKB"/>
</dbReference>
<dbReference type="GO" id="GO:0006260">
    <property type="term" value="P:DNA replication"/>
    <property type="evidence" value="ECO:0007669"/>
    <property type="project" value="UniProtKB-KW"/>
</dbReference>
<dbReference type="GO" id="GO:0039693">
    <property type="term" value="P:viral DNA genome replication"/>
    <property type="evidence" value="ECO:0000315"/>
    <property type="project" value="UniProtKB"/>
</dbReference>
<dbReference type="GO" id="GO:0019083">
    <property type="term" value="P:viral transcription"/>
    <property type="evidence" value="ECO:0000314"/>
    <property type="project" value="UniProtKB"/>
</dbReference>
<dbReference type="Gene3D" id="3.70.10.10">
    <property type="match status" value="1"/>
</dbReference>
<dbReference type="HAMAP" id="MF_04161">
    <property type="entry name" value="Sliding_clamp_T4"/>
    <property type="match status" value="1"/>
</dbReference>
<dbReference type="InterPro" id="IPR046938">
    <property type="entry name" value="DNA_clamp_sf"/>
</dbReference>
<dbReference type="InterPro" id="IPR004190">
    <property type="entry name" value="DNA_pol_proc_fac"/>
</dbReference>
<dbReference type="InterPro" id="IPR015200">
    <property type="entry name" value="Sliding_clamp_C"/>
</dbReference>
<dbReference type="InterPro" id="IPR046389">
    <property type="entry name" value="Sliding_clamp_T4"/>
</dbReference>
<dbReference type="Pfam" id="PF02916">
    <property type="entry name" value="DNA_PPF"/>
    <property type="match status" value="1"/>
</dbReference>
<dbReference type="Pfam" id="PF09116">
    <property type="entry name" value="gp45-slide_C"/>
    <property type="match status" value="1"/>
</dbReference>
<dbReference type="SUPFAM" id="SSF55979">
    <property type="entry name" value="DNA clamp"/>
    <property type="match status" value="2"/>
</dbReference>